<feature type="chain" id="PRO_0000110749" description="Orotate phosphoribosyltransferase">
    <location>
        <begin position="1"/>
        <end position="182"/>
    </location>
</feature>
<feature type="binding site" evidence="1">
    <location>
        <position position="96"/>
    </location>
    <ligand>
        <name>5-phospho-alpha-D-ribose 1-diphosphate</name>
        <dbReference type="ChEBI" id="CHEBI:58017"/>
        <note>ligand shared between dimeric partners</note>
    </ligand>
</feature>
<feature type="binding site" description="in other chain" evidence="1">
    <location>
        <position position="97"/>
    </location>
    <ligand>
        <name>5-phospho-alpha-D-ribose 1-diphosphate</name>
        <dbReference type="ChEBI" id="CHEBI:58017"/>
        <note>ligand shared between dimeric partners</note>
    </ligand>
</feature>
<feature type="binding site" evidence="1">
    <location>
        <position position="100"/>
    </location>
    <ligand>
        <name>5-phospho-alpha-D-ribose 1-diphosphate</name>
        <dbReference type="ChEBI" id="CHEBI:58017"/>
        <note>ligand shared between dimeric partners</note>
    </ligand>
</feature>
<feature type="binding site" evidence="1">
    <location>
        <position position="102"/>
    </location>
    <ligand>
        <name>5-phospho-alpha-D-ribose 1-diphosphate</name>
        <dbReference type="ChEBI" id="CHEBI:58017"/>
        <note>ligand shared between dimeric partners</note>
    </ligand>
</feature>
<feature type="binding site" description="in other chain" evidence="1">
    <location>
        <begin position="122"/>
        <end position="130"/>
    </location>
    <ligand>
        <name>5-phospho-alpha-D-ribose 1-diphosphate</name>
        <dbReference type="ChEBI" id="CHEBI:58017"/>
        <note>ligand shared between dimeric partners</note>
    </ligand>
</feature>
<feature type="binding site" evidence="1">
    <location>
        <position position="126"/>
    </location>
    <ligand>
        <name>orotate</name>
        <dbReference type="ChEBI" id="CHEBI:30839"/>
    </ligand>
</feature>
<feature type="binding site" evidence="1">
    <location>
        <position position="154"/>
    </location>
    <ligand>
        <name>orotate</name>
        <dbReference type="ChEBI" id="CHEBI:30839"/>
    </ligand>
</feature>
<keyword id="KW-0328">Glycosyltransferase</keyword>
<keyword id="KW-0460">Magnesium</keyword>
<keyword id="KW-0665">Pyrimidine biosynthesis</keyword>
<keyword id="KW-1185">Reference proteome</keyword>
<keyword id="KW-0808">Transferase</keyword>
<name>PYRE_STRCO</name>
<dbReference type="EC" id="2.4.2.10" evidence="1"/>
<dbReference type="EMBL" id="AL939117">
    <property type="protein sequence ID" value="CAB42037.1"/>
    <property type="molecule type" value="Genomic_DNA"/>
</dbReference>
<dbReference type="PIR" id="T36540">
    <property type="entry name" value="T36540"/>
</dbReference>
<dbReference type="RefSeq" id="NP_627844.1">
    <property type="nucleotide sequence ID" value="NC_003888.3"/>
</dbReference>
<dbReference type="RefSeq" id="WP_011029143.1">
    <property type="nucleotide sequence ID" value="NZ_VNID01000003.1"/>
</dbReference>
<dbReference type="SMR" id="Q9X8R7"/>
<dbReference type="FunCoup" id="Q9X8R7">
    <property type="interactions" value="169"/>
</dbReference>
<dbReference type="STRING" id="100226.gene:17761273"/>
<dbReference type="PaxDb" id="100226-SCO3650"/>
<dbReference type="GeneID" id="91385408"/>
<dbReference type="KEGG" id="sco:SCO3650"/>
<dbReference type="PATRIC" id="fig|100226.15.peg.3710"/>
<dbReference type="eggNOG" id="COG0461">
    <property type="taxonomic scope" value="Bacteria"/>
</dbReference>
<dbReference type="HOGENOM" id="CLU_074878_2_1_11"/>
<dbReference type="InParanoid" id="Q9X8R7"/>
<dbReference type="OrthoDB" id="1493031at2"/>
<dbReference type="PhylomeDB" id="Q9X8R7"/>
<dbReference type="UniPathway" id="UPA00070">
    <property type="reaction ID" value="UER00119"/>
</dbReference>
<dbReference type="Proteomes" id="UP000001973">
    <property type="component" value="Chromosome"/>
</dbReference>
<dbReference type="GO" id="GO:0000287">
    <property type="term" value="F:magnesium ion binding"/>
    <property type="evidence" value="ECO:0007669"/>
    <property type="project" value="UniProtKB-UniRule"/>
</dbReference>
<dbReference type="GO" id="GO:0004588">
    <property type="term" value="F:orotate phosphoribosyltransferase activity"/>
    <property type="evidence" value="ECO:0000318"/>
    <property type="project" value="GO_Central"/>
</dbReference>
<dbReference type="GO" id="GO:0044205">
    <property type="term" value="P:'de novo' UMP biosynthetic process"/>
    <property type="evidence" value="ECO:0007669"/>
    <property type="project" value="UniProtKB-UniRule"/>
</dbReference>
<dbReference type="GO" id="GO:0019856">
    <property type="term" value="P:pyrimidine nucleobase biosynthetic process"/>
    <property type="evidence" value="ECO:0000318"/>
    <property type="project" value="GO_Central"/>
</dbReference>
<dbReference type="GO" id="GO:0006222">
    <property type="term" value="P:UMP biosynthetic process"/>
    <property type="evidence" value="ECO:0000318"/>
    <property type="project" value="GO_Central"/>
</dbReference>
<dbReference type="CDD" id="cd06223">
    <property type="entry name" value="PRTases_typeI"/>
    <property type="match status" value="1"/>
</dbReference>
<dbReference type="FunFam" id="3.40.50.2020:FF:000029">
    <property type="entry name" value="Orotate phosphoribosyltransferase"/>
    <property type="match status" value="1"/>
</dbReference>
<dbReference type="Gene3D" id="3.40.50.2020">
    <property type="match status" value="1"/>
</dbReference>
<dbReference type="HAMAP" id="MF_01208">
    <property type="entry name" value="PyrE"/>
    <property type="match status" value="1"/>
</dbReference>
<dbReference type="InterPro" id="IPR023031">
    <property type="entry name" value="OPRT"/>
</dbReference>
<dbReference type="InterPro" id="IPR004467">
    <property type="entry name" value="Or_phspho_trans_dom"/>
</dbReference>
<dbReference type="InterPro" id="IPR000836">
    <property type="entry name" value="PRibTrfase_dom"/>
</dbReference>
<dbReference type="InterPro" id="IPR029057">
    <property type="entry name" value="PRTase-like"/>
</dbReference>
<dbReference type="NCBIfam" id="TIGR00336">
    <property type="entry name" value="pyrE"/>
    <property type="match status" value="1"/>
</dbReference>
<dbReference type="PANTHER" id="PTHR19278">
    <property type="entry name" value="OROTATE PHOSPHORIBOSYLTRANSFERASE"/>
    <property type="match status" value="1"/>
</dbReference>
<dbReference type="PANTHER" id="PTHR19278:SF9">
    <property type="entry name" value="URIDINE 5'-MONOPHOSPHATE SYNTHASE"/>
    <property type="match status" value="1"/>
</dbReference>
<dbReference type="Pfam" id="PF00156">
    <property type="entry name" value="Pribosyltran"/>
    <property type="match status" value="1"/>
</dbReference>
<dbReference type="SUPFAM" id="SSF53271">
    <property type="entry name" value="PRTase-like"/>
    <property type="match status" value="1"/>
</dbReference>
<gene>
    <name evidence="1" type="primary">pyrE</name>
    <name type="ordered locus">SCO3650</name>
    <name type="ORF">SCH10.28c</name>
</gene>
<organism>
    <name type="scientific">Streptomyces coelicolor (strain ATCC BAA-471 / A3(2) / M145)</name>
    <dbReference type="NCBI Taxonomy" id="100226"/>
    <lineage>
        <taxon>Bacteria</taxon>
        <taxon>Bacillati</taxon>
        <taxon>Actinomycetota</taxon>
        <taxon>Actinomycetes</taxon>
        <taxon>Kitasatosporales</taxon>
        <taxon>Streptomycetaceae</taxon>
        <taxon>Streptomyces</taxon>
        <taxon>Streptomyces albidoflavus group</taxon>
    </lineage>
</organism>
<comment type="function">
    <text evidence="1">Catalyzes the transfer of a ribosyl phosphate group from 5-phosphoribose 1-diphosphate to orotate, leading to the formation of orotidine monophosphate (OMP).</text>
</comment>
<comment type="catalytic activity">
    <reaction evidence="1">
        <text>orotidine 5'-phosphate + diphosphate = orotate + 5-phospho-alpha-D-ribose 1-diphosphate</text>
        <dbReference type="Rhea" id="RHEA:10380"/>
        <dbReference type="ChEBI" id="CHEBI:30839"/>
        <dbReference type="ChEBI" id="CHEBI:33019"/>
        <dbReference type="ChEBI" id="CHEBI:57538"/>
        <dbReference type="ChEBI" id="CHEBI:58017"/>
        <dbReference type="EC" id="2.4.2.10"/>
    </reaction>
</comment>
<comment type="cofactor">
    <cofactor evidence="1">
        <name>Mg(2+)</name>
        <dbReference type="ChEBI" id="CHEBI:18420"/>
    </cofactor>
</comment>
<comment type="pathway">
    <text evidence="1">Pyrimidine metabolism; UMP biosynthesis via de novo pathway; UMP from orotate: step 1/2.</text>
</comment>
<comment type="subunit">
    <text evidence="1">Homodimer.</text>
</comment>
<comment type="similarity">
    <text evidence="1">Belongs to the purine/pyrimidine phosphoribosyltransferase family. PyrE subfamily.</text>
</comment>
<protein>
    <recommendedName>
        <fullName evidence="1">Orotate phosphoribosyltransferase</fullName>
        <shortName evidence="1">OPRT</shortName>
        <shortName evidence="1">OPRTase</shortName>
        <ecNumber evidence="1">2.4.2.10</ecNumber>
    </recommendedName>
</protein>
<proteinExistence type="inferred from homology"/>
<evidence type="ECO:0000255" key="1">
    <source>
        <dbReference type="HAMAP-Rule" id="MF_01208"/>
    </source>
</evidence>
<reference key="1">
    <citation type="journal article" date="2002" name="Nature">
        <title>Complete genome sequence of the model actinomycete Streptomyces coelicolor A3(2).</title>
        <authorList>
            <person name="Bentley S.D."/>
            <person name="Chater K.F."/>
            <person name="Cerdeno-Tarraga A.-M."/>
            <person name="Challis G.L."/>
            <person name="Thomson N.R."/>
            <person name="James K.D."/>
            <person name="Harris D.E."/>
            <person name="Quail M.A."/>
            <person name="Kieser H."/>
            <person name="Harper D."/>
            <person name="Bateman A."/>
            <person name="Brown S."/>
            <person name="Chandra G."/>
            <person name="Chen C.W."/>
            <person name="Collins M."/>
            <person name="Cronin A."/>
            <person name="Fraser A."/>
            <person name="Goble A."/>
            <person name="Hidalgo J."/>
            <person name="Hornsby T."/>
            <person name="Howarth S."/>
            <person name="Huang C.-H."/>
            <person name="Kieser T."/>
            <person name="Larke L."/>
            <person name="Murphy L.D."/>
            <person name="Oliver K."/>
            <person name="O'Neil S."/>
            <person name="Rabbinowitsch E."/>
            <person name="Rajandream M.A."/>
            <person name="Rutherford K.M."/>
            <person name="Rutter S."/>
            <person name="Seeger K."/>
            <person name="Saunders D."/>
            <person name="Sharp S."/>
            <person name="Squares R."/>
            <person name="Squares S."/>
            <person name="Taylor K."/>
            <person name="Warren T."/>
            <person name="Wietzorrek A."/>
            <person name="Woodward J.R."/>
            <person name="Barrell B.G."/>
            <person name="Parkhill J."/>
            <person name="Hopwood D.A."/>
        </authorList>
    </citation>
    <scope>NUCLEOTIDE SEQUENCE [LARGE SCALE GENOMIC DNA]</scope>
    <source>
        <strain>ATCC BAA-471 / A3(2) / M145</strain>
    </source>
</reference>
<accession>Q9X8R7</accession>
<sequence>MTDVRGELLQQIKDKAVVHGKVTLSSGLEADYYVDLRRITLDGEAAPLVGQVLLDLTADLEFDAVGGLTMGADPVAASMLHAAAARGRRLDAFVVRKTAKAHGLQRRVEGPEIKGRRVVVVEDTSTTGGSPLTAVEAVREAGAEVVAVATIVDRATGAGEKIQDGAGVPYLYAYGKDELGLD</sequence>